<accession>Q8K0E7</accession>
<sequence length="450" mass="50478">MGACLGACSLLSCASCLCGSAPCILCGCCPSTRNSTVSRLLFTSFLFLGVLVSIIMLSPGVESQLYKLPWVCEDRTQQPLVLQGPLDCGSLLGFRAVYRMCFATAAFFFFFMLLMICVRSSRDPRAAIQNGFWFFKFLILVGITVGAFYIPDGSFPKIWFYFGVVGSFLFILIQLILFVDFAHSWNQRWLCKAEECDSPAWYAGLFFFTFLFYLLSIAAVALMFVYYTESGACHEGKVFISLNLTFCVCVSIIAVLPKVQDAQPNSGLLQASVITLYTMFVTWSALSNVPDQKCNPHLPTKNGTGQVDLEDYSTVWWDAPSIVGLVIFILCTFFISLRSSDHRQVNSLMQTEECPAEMVQQQQVAVSDGRAYDNEQDGVTYSYSFFHFCLVLASLHVMMTLTNWYSPGETRKMISTWTSVWVKICASWAGLFLYLWTLVAPLLLPNRDFS</sequence>
<organism>
    <name type="scientific">Mus musculus</name>
    <name type="common">Mouse</name>
    <dbReference type="NCBI Taxonomy" id="10090"/>
    <lineage>
        <taxon>Eukaryota</taxon>
        <taxon>Metazoa</taxon>
        <taxon>Chordata</taxon>
        <taxon>Craniata</taxon>
        <taxon>Vertebrata</taxon>
        <taxon>Euteleostomi</taxon>
        <taxon>Mammalia</taxon>
        <taxon>Eutheria</taxon>
        <taxon>Euarchontoglires</taxon>
        <taxon>Glires</taxon>
        <taxon>Rodentia</taxon>
        <taxon>Myomorpha</taxon>
        <taxon>Muroidea</taxon>
        <taxon>Muridae</taxon>
        <taxon>Murinae</taxon>
        <taxon>Mus</taxon>
        <taxon>Mus</taxon>
    </lineage>
</organism>
<comment type="function">
    <text evidence="1">Non-ATP-dependent, non-specific lipid transporter for phosphatidylserine, phosphatidylcholine, and phosphatidylethanolamine. Functions as a scramblase that flips lipids in both directions across the membrane. In contrast to SERINC3 and SERINC5, has no effect on gammaretrovirus particles infectivity.</text>
</comment>
<comment type="catalytic activity">
    <reaction evidence="1">
        <text>a 1,2-diacyl-sn-glycero-3-phospho-L-serine(in) = a 1,2-diacyl-sn-glycero-3-phospho-L-serine(out)</text>
        <dbReference type="Rhea" id="RHEA:38663"/>
        <dbReference type="ChEBI" id="CHEBI:57262"/>
    </reaction>
</comment>
<comment type="catalytic activity">
    <reaction evidence="1">
        <text>a 1,2-diacyl-sn-glycero-3-phosphocholine(in) = a 1,2-diacyl-sn-glycero-3-phosphocholine(out)</text>
        <dbReference type="Rhea" id="RHEA:38571"/>
        <dbReference type="ChEBI" id="CHEBI:57643"/>
    </reaction>
</comment>
<comment type="catalytic activity">
    <reaction evidence="1">
        <text>a 1,2-diacyl-sn-glycero-3-phosphoethanolamine(in) = a 1,2-diacyl-sn-glycero-3-phosphoethanolamine(out)</text>
        <dbReference type="Rhea" id="RHEA:38895"/>
        <dbReference type="ChEBI" id="CHEBI:64612"/>
    </reaction>
</comment>
<comment type="subcellular location">
    <subcellularLocation>
        <location evidence="1">Cell membrane</location>
        <topology evidence="2">Multi-pass membrane protein</topology>
    </subcellularLocation>
</comment>
<comment type="similarity">
    <text evidence="3">Belongs to the TDE1 family.</text>
</comment>
<keyword id="KW-1003">Cell membrane</keyword>
<keyword id="KW-0472">Membrane</keyword>
<keyword id="KW-1185">Reference proteome</keyword>
<keyword id="KW-0812">Transmembrane</keyword>
<keyword id="KW-1133">Transmembrane helix</keyword>
<feature type="chain" id="PRO_0000218969" description="Serine incorporator 2">
    <location>
        <begin position="1"/>
        <end position="450"/>
    </location>
</feature>
<feature type="transmembrane region" description="Helical" evidence="2">
    <location>
        <begin position="5"/>
        <end position="27"/>
    </location>
</feature>
<feature type="transmembrane region" description="Helical" evidence="2">
    <location>
        <begin position="40"/>
        <end position="57"/>
    </location>
</feature>
<feature type="transmembrane region" description="Helical" evidence="2">
    <location>
        <begin position="96"/>
        <end position="118"/>
    </location>
</feature>
<feature type="transmembrane region" description="Helical" evidence="2">
    <location>
        <begin position="131"/>
        <end position="150"/>
    </location>
</feature>
<feature type="transmembrane region" description="Helical" evidence="2">
    <location>
        <begin position="160"/>
        <end position="182"/>
    </location>
</feature>
<feature type="transmembrane region" description="Helical" evidence="2">
    <location>
        <begin position="203"/>
        <end position="225"/>
    </location>
</feature>
<feature type="transmembrane region" description="Helical" evidence="2">
    <location>
        <begin position="238"/>
        <end position="257"/>
    </location>
</feature>
<feature type="transmembrane region" description="Helical" evidence="2">
    <location>
        <begin position="264"/>
        <end position="286"/>
    </location>
</feature>
<feature type="transmembrane region" description="Helical" evidence="2">
    <location>
        <begin position="315"/>
        <end position="337"/>
    </location>
</feature>
<feature type="transmembrane region" description="Helical" evidence="2">
    <location>
        <begin position="380"/>
        <end position="402"/>
    </location>
</feature>
<feature type="transmembrane region" description="Helical" evidence="2">
    <location>
        <begin position="417"/>
        <end position="439"/>
    </location>
</feature>
<dbReference type="EMBL" id="BC031720">
    <property type="protein sequence ID" value="AAH31720.1"/>
    <property type="molecule type" value="mRNA"/>
</dbReference>
<dbReference type="CCDS" id="CCDS51310.1"/>
<dbReference type="RefSeq" id="NP_766290.2">
    <property type="nucleotide sequence ID" value="NM_172702.3"/>
</dbReference>
<dbReference type="SMR" id="Q8K0E7"/>
<dbReference type="FunCoup" id="Q8K0E7">
    <property type="interactions" value="136"/>
</dbReference>
<dbReference type="STRING" id="10090.ENSMUSP00000101618"/>
<dbReference type="PhosphoSitePlus" id="Q8K0E7"/>
<dbReference type="PaxDb" id="10090-ENSMUSP00000101618"/>
<dbReference type="ProteomicsDB" id="256965"/>
<dbReference type="Antibodypedia" id="31115">
    <property type="antibodies" value="164 antibodies from 28 providers"/>
</dbReference>
<dbReference type="DNASU" id="230779"/>
<dbReference type="Ensembl" id="ENSMUST00000105996.8">
    <property type="protein sequence ID" value="ENSMUSP00000101618.2"/>
    <property type="gene ID" value="ENSMUSG00000023232.18"/>
</dbReference>
<dbReference type="GeneID" id="230779"/>
<dbReference type="KEGG" id="mmu:230779"/>
<dbReference type="UCSC" id="uc008uzc.1">
    <property type="organism name" value="mouse"/>
</dbReference>
<dbReference type="AGR" id="MGI:1919132"/>
<dbReference type="CTD" id="347735"/>
<dbReference type="MGI" id="MGI:1919132">
    <property type="gene designation" value="Serinc2"/>
</dbReference>
<dbReference type="VEuPathDB" id="HostDB:ENSMUSG00000023232"/>
<dbReference type="eggNOG" id="KOG2592">
    <property type="taxonomic scope" value="Eukaryota"/>
</dbReference>
<dbReference type="GeneTree" id="ENSGT01030000234623"/>
<dbReference type="HOGENOM" id="CLU_029574_5_0_1"/>
<dbReference type="InParanoid" id="Q8K0E7"/>
<dbReference type="OMA" id="ECCESEK"/>
<dbReference type="OrthoDB" id="5963193at2759"/>
<dbReference type="TreeFam" id="TF312881"/>
<dbReference type="Reactome" id="R-MMU-977347">
    <property type="pathway name" value="Serine biosynthesis"/>
</dbReference>
<dbReference type="BioGRID-ORCS" id="230779">
    <property type="hits" value="2 hits in 80 CRISPR screens"/>
</dbReference>
<dbReference type="ChiTaRS" id="Serinc2">
    <property type="organism name" value="mouse"/>
</dbReference>
<dbReference type="PRO" id="PR:Q8K0E7"/>
<dbReference type="Proteomes" id="UP000000589">
    <property type="component" value="Chromosome 4"/>
</dbReference>
<dbReference type="RNAct" id="Q8K0E7">
    <property type="molecule type" value="protein"/>
</dbReference>
<dbReference type="Bgee" id="ENSMUSG00000023232">
    <property type="expression patterns" value="Expressed in manus and 154 other cell types or tissues"/>
</dbReference>
<dbReference type="ExpressionAtlas" id="Q8K0E7">
    <property type="expression patterns" value="baseline and differential"/>
</dbReference>
<dbReference type="GO" id="GO:0005886">
    <property type="term" value="C:plasma membrane"/>
    <property type="evidence" value="ECO:0000250"/>
    <property type="project" value="UniProtKB"/>
</dbReference>
<dbReference type="GO" id="GO:0017128">
    <property type="term" value="F:phospholipid scramblase activity"/>
    <property type="evidence" value="ECO:0000250"/>
    <property type="project" value="UniProtKB"/>
</dbReference>
<dbReference type="GO" id="GO:0017121">
    <property type="term" value="P:plasma membrane phospholipid scrambling"/>
    <property type="evidence" value="ECO:0000250"/>
    <property type="project" value="UniProtKB"/>
</dbReference>
<dbReference type="InterPro" id="IPR005016">
    <property type="entry name" value="TDE1/TMS"/>
</dbReference>
<dbReference type="PANTHER" id="PTHR10383">
    <property type="entry name" value="SERINE INCORPORATOR"/>
    <property type="match status" value="1"/>
</dbReference>
<dbReference type="PANTHER" id="PTHR10383:SF22">
    <property type="entry name" value="SERINE INCORPORATOR 2"/>
    <property type="match status" value="1"/>
</dbReference>
<dbReference type="Pfam" id="PF03348">
    <property type="entry name" value="Serinc"/>
    <property type="match status" value="1"/>
</dbReference>
<name>SERC2_MOUSE</name>
<protein>
    <recommendedName>
        <fullName>Serine incorporator 2</fullName>
    </recommendedName>
    <alternativeName>
        <fullName>Tumor differentially expressed protein 2-like</fullName>
    </alternativeName>
</protein>
<reference key="1">
    <citation type="journal article" date="2004" name="Genome Res.">
        <title>The status, quality, and expansion of the NIH full-length cDNA project: the Mammalian Gene Collection (MGC).</title>
        <authorList>
            <consortium name="The MGC Project Team"/>
        </authorList>
    </citation>
    <scope>NUCLEOTIDE SEQUENCE [LARGE SCALE MRNA]</scope>
    <source>
        <tissue>Colon</tissue>
    </source>
</reference>
<proteinExistence type="evidence at transcript level"/>
<gene>
    <name type="primary">Serinc2</name>
    <name type="synonym">Tde2l</name>
</gene>
<evidence type="ECO:0000250" key="1">
    <source>
        <dbReference type="UniProtKB" id="Q96SA4"/>
    </source>
</evidence>
<evidence type="ECO:0000255" key="2"/>
<evidence type="ECO:0000305" key="3"/>